<gene>
    <name type="primary">cia1</name>
    <name type="ORF">SS1G_10762</name>
</gene>
<proteinExistence type="inferred from homology"/>
<name>CIAO1_SCLS1</name>
<dbReference type="EMBL" id="CH476636">
    <property type="protein sequence ID" value="EDN94887.1"/>
    <property type="molecule type" value="Genomic_DNA"/>
</dbReference>
<dbReference type="RefSeq" id="XP_001588315.1">
    <property type="nucleotide sequence ID" value="XM_001588265.1"/>
</dbReference>
<dbReference type="SMR" id="A7EZJ5"/>
<dbReference type="FunCoup" id="A7EZJ5">
    <property type="interactions" value="61"/>
</dbReference>
<dbReference type="STRING" id="665079.A7EZJ5"/>
<dbReference type="GeneID" id="5484197"/>
<dbReference type="KEGG" id="ssl:SS1G_10762"/>
<dbReference type="VEuPathDB" id="FungiDB:sscle_09g070090"/>
<dbReference type="InParanoid" id="A7EZJ5"/>
<dbReference type="OMA" id="IREIRWS"/>
<dbReference type="OrthoDB" id="284782at2759"/>
<dbReference type="Proteomes" id="UP000001312">
    <property type="component" value="Unassembled WGS sequence"/>
</dbReference>
<dbReference type="GO" id="GO:0097361">
    <property type="term" value="C:cytosolic [4Fe-4S] assembly targeting complex"/>
    <property type="evidence" value="ECO:0000318"/>
    <property type="project" value="GO_Central"/>
</dbReference>
<dbReference type="GO" id="GO:0016226">
    <property type="term" value="P:iron-sulfur cluster assembly"/>
    <property type="evidence" value="ECO:0000318"/>
    <property type="project" value="GO_Central"/>
</dbReference>
<dbReference type="Gene3D" id="2.130.10.10">
    <property type="entry name" value="YVTN repeat-like/Quinoprotein amine dehydrogenase"/>
    <property type="match status" value="1"/>
</dbReference>
<dbReference type="HAMAP" id="MF_03037">
    <property type="entry name" value="ciao1"/>
    <property type="match status" value="1"/>
</dbReference>
<dbReference type="InterPro" id="IPR028608">
    <property type="entry name" value="CIAO1/Cia1"/>
</dbReference>
<dbReference type="InterPro" id="IPR015943">
    <property type="entry name" value="WD40/YVTN_repeat-like_dom_sf"/>
</dbReference>
<dbReference type="InterPro" id="IPR036322">
    <property type="entry name" value="WD40_repeat_dom_sf"/>
</dbReference>
<dbReference type="InterPro" id="IPR001680">
    <property type="entry name" value="WD40_rpt"/>
</dbReference>
<dbReference type="PANTHER" id="PTHR19920:SF0">
    <property type="entry name" value="CYTOSOLIC IRON-SULFUR PROTEIN ASSEMBLY PROTEIN CIAO1-RELATED"/>
    <property type="match status" value="1"/>
</dbReference>
<dbReference type="PANTHER" id="PTHR19920">
    <property type="entry name" value="WD40 PROTEIN CIAO1"/>
    <property type="match status" value="1"/>
</dbReference>
<dbReference type="Pfam" id="PF00400">
    <property type="entry name" value="WD40"/>
    <property type="match status" value="4"/>
</dbReference>
<dbReference type="SMART" id="SM00320">
    <property type="entry name" value="WD40"/>
    <property type="match status" value="7"/>
</dbReference>
<dbReference type="SUPFAM" id="SSF50978">
    <property type="entry name" value="WD40 repeat-like"/>
    <property type="match status" value="1"/>
</dbReference>
<dbReference type="PROSITE" id="PS50082">
    <property type="entry name" value="WD_REPEATS_2"/>
    <property type="match status" value="1"/>
</dbReference>
<dbReference type="PROSITE" id="PS50294">
    <property type="entry name" value="WD_REPEATS_REGION"/>
    <property type="match status" value="1"/>
</dbReference>
<protein>
    <recommendedName>
        <fullName evidence="1">Probable cytosolic iron-sulfur protein assembly protein 1</fullName>
    </recommendedName>
</protein>
<evidence type="ECO:0000255" key="1">
    <source>
        <dbReference type="HAMAP-Rule" id="MF_03037"/>
    </source>
</evidence>
<evidence type="ECO:0000256" key="2">
    <source>
        <dbReference type="SAM" id="MobiDB-lite"/>
    </source>
</evidence>
<keyword id="KW-1185">Reference proteome</keyword>
<keyword id="KW-0677">Repeat</keyword>
<keyword id="KW-0853">WD repeat</keyword>
<accession>A7EZJ5</accession>
<comment type="function">
    <text evidence="1">Essential component of the cytosolic iron-sulfur (Fe/S) protein assembly machinery. Required for the maturation of extramitochondrial Fe/S proteins.</text>
</comment>
<comment type="similarity">
    <text evidence="1">Belongs to the WD repeat CIA1 family.</text>
</comment>
<organism>
    <name type="scientific">Sclerotinia sclerotiorum (strain ATCC 18683 / 1980 / Ss-1)</name>
    <name type="common">White mold</name>
    <name type="synonym">Whetzelinia sclerotiorum</name>
    <dbReference type="NCBI Taxonomy" id="665079"/>
    <lineage>
        <taxon>Eukaryota</taxon>
        <taxon>Fungi</taxon>
        <taxon>Dikarya</taxon>
        <taxon>Ascomycota</taxon>
        <taxon>Pezizomycotina</taxon>
        <taxon>Leotiomycetes</taxon>
        <taxon>Helotiales</taxon>
        <taxon>Sclerotiniaceae</taxon>
        <taxon>Sclerotinia</taxon>
    </lineage>
</organism>
<feature type="chain" id="PRO_0000382526" description="Probable cytosolic iron-sulfur protein assembly protein 1">
    <location>
        <begin position="1"/>
        <end position="452"/>
    </location>
</feature>
<feature type="repeat" description="WD 1">
    <location>
        <begin position="20"/>
        <end position="59"/>
    </location>
</feature>
<feature type="repeat" description="WD 2">
    <location>
        <begin position="63"/>
        <end position="118"/>
    </location>
</feature>
<feature type="repeat" description="WD 3">
    <location>
        <begin position="163"/>
        <end position="202"/>
    </location>
</feature>
<feature type="repeat" description="WD 4">
    <location>
        <begin position="211"/>
        <end position="253"/>
    </location>
</feature>
<feature type="repeat" description="WD 5">
    <location>
        <begin position="259"/>
        <end position="313"/>
    </location>
</feature>
<feature type="repeat" description="WD 6">
    <location>
        <begin position="344"/>
        <end position="383"/>
    </location>
</feature>
<feature type="repeat" description="WD 7">
    <location>
        <begin position="405"/>
        <end position="449"/>
    </location>
</feature>
<feature type="region of interest" description="Disordered" evidence="2">
    <location>
        <begin position="112"/>
        <end position="153"/>
    </location>
</feature>
<reference key="1">
    <citation type="journal article" date="2011" name="PLoS Genet.">
        <title>Genomic analysis of the necrotrophic fungal pathogens Sclerotinia sclerotiorum and Botrytis cinerea.</title>
        <authorList>
            <person name="Amselem J."/>
            <person name="Cuomo C.A."/>
            <person name="van Kan J.A.L."/>
            <person name="Viaud M."/>
            <person name="Benito E.P."/>
            <person name="Couloux A."/>
            <person name="Coutinho P.M."/>
            <person name="de Vries R.P."/>
            <person name="Dyer P.S."/>
            <person name="Fillinger S."/>
            <person name="Fournier E."/>
            <person name="Gout L."/>
            <person name="Hahn M."/>
            <person name="Kohn L."/>
            <person name="Lapalu N."/>
            <person name="Plummer K.M."/>
            <person name="Pradier J.-M."/>
            <person name="Quevillon E."/>
            <person name="Sharon A."/>
            <person name="Simon A."/>
            <person name="ten Have A."/>
            <person name="Tudzynski B."/>
            <person name="Tudzynski P."/>
            <person name="Wincker P."/>
            <person name="Andrew M."/>
            <person name="Anthouard V."/>
            <person name="Beever R.E."/>
            <person name="Beffa R."/>
            <person name="Benoit I."/>
            <person name="Bouzid O."/>
            <person name="Brault B."/>
            <person name="Chen Z."/>
            <person name="Choquer M."/>
            <person name="Collemare J."/>
            <person name="Cotton P."/>
            <person name="Danchin E.G."/>
            <person name="Da Silva C."/>
            <person name="Gautier A."/>
            <person name="Giraud C."/>
            <person name="Giraud T."/>
            <person name="Gonzalez C."/>
            <person name="Grossetete S."/>
            <person name="Gueldener U."/>
            <person name="Henrissat B."/>
            <person name="Howlett B.J."/>
            <person name="Kodira C."/>
            <person name="Kretschmer M."/>
            <person name="Lappartient A."/>
            <person name="Leroch M."/>
            <person name="Levis C."/>
            <person name="Mauceli E."/>
            <person name="Neuveglise C."/>
            <person name="Oeser B."/>
            <person name="Pearson M."/>
            <person name="Poulain J."/>
            <person name="Poussereau N."/>
            <person name="Quesneville H."/>
            <person name="Rascle C."/>
            <person name="Schumacher J."/>
            <person name="Segurens B."/>
            <person name="Sexton A."/>
            <person name="Silva E."/>
            <person name="Sirven C."/>
            <person name="Soanes D.M."/>
            <person name="Talbot N.J."/>
            <person name="Templeton M."/>
            <person name="Yandava C."/>
            <person name="Yarden O."/>
            <person name="Zeng Q."/>
            <person name="Rollins J.A."/>
            <person name="Lebrun M.-H."/>
            <person name="Dickman M."/>
        </authorList>
    </citation>
    <scope>NUCLEOTIDE SEQUENCE [LARGE SCALE GENOMIC DNA]</scope>
    <source>
        <strain>ATCC 18683 / 1980 / Ss-1</strain>
    </source>
</reference>
<sequence length="452" mass="49864">MPSSLPTMILKHLADFKPQAATRAWASIPNPNNLPLIATATSDKSVRVYSLSNFTLHSKLEGGHERSVRSAAWKPGVRKDGALTLATGGFDTMMTIATGSFDATMGVWRRKEEQKNTIEDGPLELEIGADGRPNKGPSLRRGGDDGSDEDEGDDWEFSIVLEGHDSEIKHVAYSPSGQWLASCSRDKTIWIWEEIGDEGEDEFETVAVLQDHTADVKCVCWRKDDGNGEVLASGSYDDTILLSKEDGEGDWETIAKLEGHDGTVWSLDWEPDVSIKSDSSEESSVPPTPRLLSSSADMTVRIWSKMPTPPPQNKPSYFNAGIPSTMRPGPVNETWECTATLPKVHDLPVYSINWSKYSGRIVSTGGDGRVAIYEERTKGRNTVGGTIEKEWVVLTVLEGAHGPYEVNHVTWCMRYDNGKKKPDEEMIITTGDDGLTKAWFIEEDIEESKVEA</sequence>